<reference key="1">
    <citation type="journal article" date="1994" name="J. Cell Biol.">
        <title>MMM1 encodes a mitochondrial outer membrane protein essential for establishing and maintaining the structure of yeast mitochondria.</title>
        <authorList>
            <person name="Burgess S.M."/>
            <person name="Delannoy M."/>
            <person name="Jensen R.E."/>
        </authorList>
    </citation>
    <scope>NUCLEOTIDE SEQUENCE [GENOMIC DNA]</scope>
    <scope>FUNCTION</scope>
    <scope>SUBCELLULAR LOCATION</scope>
    <source>
        <strain>ATCC 90850 / YH8</strain>
    </source>
</reference>
<reference key="2">
    <citation type="journal article" date="1996" name="Yeast">
        <title>Sequence analysis of the CEN12 region of Saccharomyces cerevisiae on a 43.7 kb fragment of chromosome XII including an open reading frame homologous to the human cystic fibrosis transmembrane conductance regulator protein CFTR.</title>
        <authorList>
            <person name="Miosga T."/>
            <person name="Zimmermann F.K."/>
        </authorList>
    </citation>
    <scope>NUCLEOTIDE SEQUENCE [GENOMIC DNA]</scope>
    <source>
        <strain>ATCC 90840 / EAY235 / FY23</strain>
    </source>
</reference>
<reference key="3">
    <citation type="journal article" date="1997" name="Nature">
        <title>The nucleotide sequence of Saccharomyces cerevisiae chromosome XII.</title>
        <authorList>
            <person name="Johnston M."/>
            <person name="Hillier L.W."/>
            <person name="Riles L."/>
            <person name="Albermann K."/>
            <person name="Andre B."/>
            <person name="Ansorge W."/>
            <person name="Benes V."/>
            <person name="Brueckner M."/>
            <person name="Delius H."/>
            <person name="Dubois E."/>
            <person name="Duesterhoeft A."/>
            <person name="Entian K.-D."/>
            <person name="Floeth M."/>
            <person name="Goffeau A."/>
            <person name="Hebling U."/>
            <person name="Heumann K."/>
            <person name="Heuss-Neitzel D."/>
            <person name="Hilbert H."/>
            <person name="Hilger F."/>
            <person name="Kleine K."/>
            <person name="Koetter P."/>
            <person name="Louis E.J."/>
            <person name="Messenguy F."/>
            <person name="Mewes H.-W."/>
            <person name="Miosga T."/>
            <person name="Moestl D."/>
            <person name="Mueller-Auer S."/>
            <person name="Nentwich U."/>
            <person name="Obermaier B."/>
            <person name="Piravandi E."/>
            <person name="Pohl T.M."/>
            <person name="Portetelle D."/>
            <person name="Purnelle B."/>
            <person name="Rechmann S."/>
            <person name="Rieger M."/>
            <person name="Rinke M."/>
            <person name="Rose M."/>
            <person name="Scharfe M."/>
            <person name="Scherens B."/>
            <person name="Scholler P."/>
            <person name="Schwager C."/>
            <person name="Schwarz S."/>
            <person name="Underwood A.P."/>
            <person name="Urrestarazu L.A."/>
            <person name="Vandenbol M."/>
            <person name="Verhasselt P."/>
            <person name="Vierendeels F."/>
            <person name="Voet M."/>
            <person name="Volckaert G."/>
            <person name="Voss H."/>
            <person name="Wambutt R."/>
            <person name="Wedler E."/>
            <person name="Wedler H."/>
            <person name="Zimmermann F.K."/>
            <person name="Zollner A."/>
            <person name="Hani J."/>
            <person name="Hoheisel J.D."/>
        </authorList>
    </citation>
    <scope>NUCLEOTIDE SEQUENCE [LARGE SCALE GENOMIC DNA]</scope>
    <source>
        <strain>ATCC 204508 / S288c</strain>
    </source>
</reference>
<reference key="4">
    <citation type="journal article" date="2014" name="G3 (Bethesda)">
        <title>The reference genome sequence of Saccharomyces cerevisiae: Then and now.</title>
        <authorList>
            <person name="Engel S.R."/>
            <person name="Dietrich F.S."/>
            <person name="Fisk D.G."/>
            <person name="Binkley G."/>
            <person name="Balakrishnan R."/>
            <person name="Costanzo M.C."/>
            <person name="Dwight S.S."/>
            <person name="Hitz B.C."/>
            <person name="Karra K."/>
            <person name="Nash R.S."/>
            <person name="Weng S."/>
            <person name="Wong E.D."/>
            <person name="Lloyd P."/>
            <person name="Skrzypek M.S."/>
            <person name="Miyasato S.R."/>
            <person name="Simison M."/>
            <person name="Cherry J.M."/>
        </authorList>
    </citation>
    <scope>GENOME REANNOTATION</scope>
    <source>
        <strain>ATCC 204508 / S288c</strain>
    </source>
</reference>
<reference key="5">
    <citation type="journal article" date="1998" name="J. Cell Biol.">
        <title>Interaction between mitochondria and the actin cytoskeleton in budding yeast requires two integral mitochondrial outer membrane proteins, Mmm1p and Mdm10p.</title>
        <authorList>
            <person name="Boldogh I.R."/>
            <person name="Vojtov N."/>
            <person name="Karmon S."/>
            <person name="Pon L.A."/>
        </authorList>
    </citation>
    <scope>FUNCTION</scope>
</reference>
<reference key="6">
    <citation type="journal article" date="2001" name="J. Cell Biol.">
        <title>Mmm1p, a mitochondrial outer membrane protein, is connected to mitochondrial DNA (mtDNA) nucleoids and required for mtDNA stability.</title>
        <authorList>
            <person name="Hobbs A.E.A."/>
            <person name="Srinivasan M."/>
            <person name="McCaffery J.M."/>
            <person name="Jensen R.E."/>
        </authorList>
    </citation>
    <scope>FUNCTION</scope>
    <scope>SUBCELLULAR LOCATION</scope>
</reference>
<reference key="7">
    <citation type="journal article" date="2002" name="Genetics">
        <title>Maintenance of mitochondrial morphology is linked to maintenance of the mitochondrial genome in Saccharomyces cerevisiae.</title>
        <authorList>
            <person name="Hanekamp T."/>
            <person name="Thorsness M.K."/>
            <person name="Rebbapragada I."/>
            <person name="Fisher E.M."/>
            <person name="Seebart C."/>
            <person name="Darland M.R."/>
            <person name="Coxbill J.A."/>
            <person name="Updike D.L."/>
            <person name="Thorsness P.E."/>
        </authorList>
    </citation>
    <scope>FUNCTION</scope>
    <scope>MUTAGENESIS OF GLU-215</scope>
</reference>
<reference key="8">
    <citation type="journal article" date="2003" name="J. Biol. Chem.">
        <title>Mmm1p spans both the outer and inner mitochondrial membranes and contains distinct domains for targeting and foci formation.</title>
        <authorList>
            <person name="Kondo-Okamoto N."/>
            <person name="Shaw J.M."/>
            <person name="Okamoto K."/>
        </authorList>
    </citation>
    <scope>SUBCELLULAR LOCATION</scope>
    <scope>TOPOLOGY</scope>
</reference>
<reference key="9">
    <citation type="journal article" date="2003" name="Mol. Biol. Cell">
        <title>A protein complex containing Mdm10p, Mdm12p, and Mmm1p links mitochondrial membranes and DNA to the cytoskeleton-based segregation machinery.</title>
        <authorList>
            <person name="Boldogh I.R."/>
            <person name="Nowakowski D.W."/>
            <person name="Yang H.-C."/>
            <person name="Chung H."/>
            <person name="Karmon S."/>
            <person name="Royes P."/>
            <person name="Pon L.A."/>
        </authorList>
    </citation>
    <scope>IDENTIFICATION IN THE MDM10/MDM12/MMM1 COMPLEX</scope>
</reference>
<reference key="10">
    <citation type="journal article" date="2003" name="Nature">
        <title>Global analysis of protein localization in budding yeast.</title>
        <authorList>
            <person name="Huh W.-K."/>
            <person name="Falvo J.V."/>
            <person name="Gerke L.C."/>
            <person name="Carroll A.S."/>
            <person name="Howson R.W."/>
            <person name="Weissman J.S."/>
            <person name="O'Shea E.K."/>
        </authorList>
    </citation>
    <scope>SUBCELLULAR LOCATION [LARGE SCALE ANALYSIS]</scope>
</reference>
<reference key="11">
    <citation type="journal article" date="2003" name="Nature">
        <title>Global analysis of protein expression in yeast.</title>
        <authorList>
            <person name="Ghaemmaghami S."/>
            <person name="Huh W.-K."/>
            <person name="Bower K."/>
            <person name="Howson R.W."/>
            <person name="Belle A."/>
            <person name="Dephoure N."/>
            <person name="O'Shea E.K."/>
            <person name="Weissman J.S."/>
        </authorList>
    </citation>
    <scope>LEVEL OF PROTEIN EXPRESSION [LARGE SCALE ANALYSIS]</scope>
</reference>
<reference key="12">
    <citation type="journal article" date="2003" name="Proc. Natl. Acad. Sci. U.S.A.">
        <title>The proteome of Saccharomyces cerevisiae mitochondria.</title>
        <authorList>
            <person name="Sickmann A."/>
            <person name="Reinders J."/>
            <person name="Wagner Y."/>
            <person name="Joppich C."/>
            <person name="Zahedi R.P."/>
            <person name="Meyer H.E."/>
            <person name="Schoenfisch B."/>
            <person name="Perschil I."/>
            <person name="Chacinska A."/>
            <person name="Guiard B."/>
            <person name="Rehling P."/>
            <person name="Pfanner N."/>
            <person name="Meisinger C."/>
        </authorList>
    </citation>
    <scope>SUBCELLULAR LOCATION [LARGE SCALE ANALYSIS]</scope>
    <source>
        <strain>ATCC 76625 / YPH499</strain>
    </source>
</reference>
<reference key="13">
    <citation type="journal article" date="2004" name="J. Cell Biol.">
        <title>Mmm2p, a mitochondrial outer membrane protein required for yeast mitochondrial shape and maintenance of mtDNA nucleoids.</title>
        <authorList>
            <person name="Youngman M.J."/>
            <person name="Hobbs A.E.A."/>
            <person name="Burgess S.M."/>
            <person name="Srinivasan M."/>
            <person name="Jensen R.E."/>
        </authorList>
    </citation>
    <scope>FUNCTION</scope>
    <scope>SUBCELLULAR LOCATION</scope>
</reference>
<reference key="14">
    <citation type="journal article" date="2006" name="Mol. Biol. Cell">
        <title>Proteomic analysis of the yeast mitochondrial outer membrane reveals accumulation of a subclass of preproteins.</title>
        <authorList>
            <person name="Zahedi R.P."/>
            <person name="Sickmann A."/>
            <person name="Boehm A.M."/>
            <person name="Winkler C."/>
            <person name="Zufall N."/>
            <person name="Schoenfisch B."/>
            <person name="Guiard B."/>
            <person name="Pfanner N."/>
            <person name="Meisinger C."/>
        </authorList>
    </citation>
    <scope>SUBCELLULAR LOCATION</scope>
    <scope>IDENTIFICATION BY MASS SPECTROMETRY</scope>
</reference>
<reference key="15">
    <citation type="journal article" date="2007" name="EMBO J.">
        <title>The morphology proteins Mdm12/Mmm1 function in the major beta-barrel assembly pathway of mitochondria.</title>
        <authorList>
            <person name="Meisinger C."/>
            <person name="Pfannschmidt S."/>
            <person name="Rissler M."/>
            <person name="Milenkovic D."/>
            <person name="Becker T."/>
            <person name="Stojanovski D."/>
            <person name="Youngman M.J."/>
            <person name="Jensen R.E."/>
            <person name="Chacinska A."/>
            <person name="Guiard B."/>
            <person name="Pfanner N."/>
            <person name="Wiedemann N."/>
        </authorList>
    </citation>
    <scope>FUNCTION</scope>
    <scope>IDENTIFICATION IN MDM12/MMM1 AND MDM10/MDM12/MMM1 COMPLEXES</scope>
</reference>
<reference key="16">
    <citation type="journal article" date="2009" name="Science">
        <title>An ER-mitochondria tethering complex revealed by a synthetic biology screen.</title>
        <authorList>
            <person name="Kornmann B."/>
            <person name="Currie E."/>
            <person name="Collins S.R."/>
            <person name="Schuldiner M."/>
            <person name="Nunnari J."/>
            <person name="Weissman J.S."/>
            <person name="Walter P."/>
        </authorList>
    </citation>
    <scope>FUNCTION</scope>
    <scope>IDENTIFICATION IN ERMES/MDM COMPLEX</scope>
    <scope>SUBCELLULAR LOCATION</scope>
    <scope>TOPOLOGY</scope>
    <scope>GLYCOSYLATION</scope>
</reference>
<reference key="17">
    <citation type="journal article" date="2012" name="J. Cell Sci.">
        <title>A conserved membrane-binding domain targets proteins to organelle contact sites.</title>
        <authorList>
            <person name="Toulmay A."/>
            <person name="Prinz W.A."/>
        </authorList>
    </citation>
    <scope>SUBCELLULAR LOCATION</scope>
</reference>
<reference key="18">
    <citation type="journal article" date="2015" name="J. Cell Biol.">
        <title>ER-mitochondrial junctions can be bypassed by dominant mutations in the endosomal protein Vps13.</title>
        <authorList>
            <person name="Lang A.B."/>
            <person name="John Peter A.T."/>
            <person name="Walter P."/>
            <person name="Kornmann B."/>
        </authorList>
    </citation>
    <scope>DISRUPTION PHENOTYPE</scope>
</reference>
<reference key="19">
    <citation type="journal article" date="2016" name="Mol. Biol. Cell">
        <title>Yeast Vps13 promotes mitochondrial function and is localized at membrane contact sites.</title>
        <authorList>
            <person name="Park J.S."/>
            <person name="Thorsness M.K."/>
            <person name="Policastro R."/>
            <person name="McGoldrick L.L."/>
            <person name="Hollingsworth N.M."/>
            <person name="Thorsness P.E."/>
            <person name="Neiman A.M."/>
        </authorList>
    </citation>
    <scope>DISRUPTION PHENOTYPE</scope>
</reference>
<reference key="20">
    <citation type="journal article" date="2016" name="Sci. Rep.">
        <title>A phospholipid transfer function of ER-mitochondria encounter structure revealed in vitro.</title>
        <authorList>
            <person name="Kojima R."/>
            <person name="Endo T."/>
            <person name="Tamura Y."/>
        </authorList>
    </citation>
    <scope>FUNCTION</scope>
</reference>
<proteinExistence type="evidence at protein level"/>
<organism>
    <name type="scientific">Saccharomyces cerevisiae (strain ATCC 204508 / S288c)</name>
    <name type="common">Baker's yeast</name>
    <dbReference type="NCBI Taxonomy" id="559292"/>
    <lineage>
        <taxon>Eukaryota</taxon>
        <taxon>Fungi</taxon>
        <taxon>Dikarya</taxon>
        <taxon>Ascomycota</taxon>
        <taxon>Saccharomycotina</taxon>
        <taxon>Saccharomycetes</taxon>
        <taxon>Saccharomycetales</taxon>
        <taxon>Saccharomycetaceae</taxon>
        <taxon>Saccharomyces</taxon>
    </lineage>
</organism>
<name>MMM1_YEAST</name>
<sequence length="426" mass="48660">MTDSENESTETDSLMTFDDYISKELPEHLQRLIMENLKGSTTNDLKQTSNNSEFNVSKNGSFKGLDDAIQALQMQSVLHPSSLGSLATSSKFSGWSFAQGFFVGQLSIVLLFIFFLKFFIFSDEPSKSKNPKPAASRHRSKFKEYPFISREFLTSLVRKGAKQHYELNEEAENEHLQELALILEKTYYNVDVHPAESLDWFNVLVAQIIQQFRSEAWHRDNILHSLNDFIGRKSPDLPEYLDTIKITELDTGDDFPIFSNCRIQYSPNSGNKKLEAKIDIDLNDHLTLGVETKLLLNYPKPGIAALPINLVVSIVRFQACLTVSLTNAEEFASTSNGSSSENGMEGNSGYFLMFSFSPEYRMEFEIKSLIGSRSKLENIPKIGSVIEYQIKKWFVERCVEPRFQFVRLPSMWPRSKNTREEKPTEL</sequence>
<protein>
    <recommendedName>
        <fullName evidence="2">Maintenance of mitochondrial morphology protein 1</fullName>
    </recommendedName>
    <alternativeName>
        <fullName evidence="2">Mitochondrial outer membrane protein MMM1</fullName>
    </alternativeName>
    <alternativeName>
        <fullName evidence="2">Yeast mitochondrial escape protein 6</fullName>
    </alternativeName>
</protein>
<feature type="chain" id="PRO_0000096506" description="Maintenance of mitochondrial morphology protein 1">
    <location>
        <begin position="1"/>
        <end position="426"/>
    </location>
</feature>
<feature type="topological domain" description="Lumenal" evidence="2">
    <location>
        <begin position="1"/>
        <end position="100"/>
    </location>
</feature>
<feature type="transmembrane region" description="Helical" evidence="2">
    <location>
        <begin position="101"/>
        <end position="121"/>
    </location>
</feature>
<feature type="topological domain" description="Cytoplasmic" evidence="2">
    <location>
        <begin position="122"/>
        <end position="426"/>
    </location>
</feature>
<feature type="domain" description="SMP-LTD" evidence="2">
    <location>
        <begin position="194"/>
        <end position="409"/>
    </location>
</feature>
<feature type="glycosylation site" description="N-linked (GlcNAc...) asparagine" evidence="3">
    <location>
        <position position="6"/>
    </location>
</feature>
<feature type="glycosylation site" description="N-linked (GlcNAc...) asparagine" evidence="3">
    <location>
        <position position="50"/>
    </location>
</feature>
<feature type="glycosylation site" description="N-linked (GlcNAc...) asparagine" evidence="3">
    <location>
        <position position="55"/>
    </location>
</feature>
<feature type="glycosylation site" description="N-linked (GlcNAc...) asparagine" evidence="3">
    <location>
        <position position="59"/>
    </location>
</feature>
<feature type="mutagenesis site" description="In MMM1-6; impairs both mtDNA maintenance and mitochondrial morpholgy." evidence="5">
    <original>E</original>
    <variation>K</variation>
    <location>
        <position position="215"/>
    </location>
</feature>
<feature type="sequence conflict" description="In Ref. 1; AAA53581." evidence="21" ref="1">
    <original>W</original>
    <variation>S</variation>
    <location>
        <position position="200"/>
    </location>
</feature>
<feature type="sequence conflict" description="In Ref. 1; AAA53581." evidence="21" ref="1">
    <original>S</original>
    <variation>W</variation>
    <location>
        <position position="225"/>
    </location>
</feature>
<feature type="sequence conflict" description="In Ref. 1; AAA53581." evidence="21" ref="1">
    <original>S</original>
    <variation>A</variation>
    <location>
        <position position="357"/>
    </location>
</feature>
<feature type="sequence conflict" description="In Ref. 1; AAA53581." evidence="21" ref="1">
    <original>E</original>
    <variation>Q</variation>
    <location>
        <position position="365"/>
    </location>
</feature>
<feature type="sequence conflict" description="In Ref. 1; AAA53581." evidence="21" ref="1">
    <original>S</original>
    <variation>P</variation>
    <location>
        <position position="368"/>
    </location>
</feature>
<gene>
    <name evidence="2" type="primary">MMM1</name>
    <name type="synonym">YME6</name>
    <name type="ordered locus">YLL006W</name>
    <name type="ORF">L1357</name>
</gene>
<evidence type="ECO:0000250" key="1">
    <source>
        <dbReference type="UniProtKB" id="C5DRQ1"/>
    </source>
</evidence>
<evidence type="ECO:0000255" key="2">
    <source>
        <dbReference type="HAMAP-Rule" id="MF_03103"/>
    </source>
</evidence>
<evidence type="ECO:0000255" key="3">
    <source>
        <dbReference type="PROSITE-ProRule" id="PRU00498"/>
    </source>
</evidence>
<evidence type="ECO:0000269" key="4">
    <source>
    </source>
</evidence>
<evidence type="ECO:0000269" key="5">
    <source>
    </source>
</evidence>
<evidence type="ECO:0000269" key="6">
    <source>
    </source>
</evidence>
<evidence type="ECO:0000269" key="7">
    <source>
    </source>
</evidence>
<evidence type="ECO:0000269" key="8">
    <source>
    </source>
</evidence>
<evidence type="ECO:0000269" key="9">
    <source>
    </source>
</evidence>
<evidence type="ECO:0000269" key="10">
    <source>
    </source>
</evidence>
<evidence type="ECO:0000269" key="11">
    <source>
    </source>
</evidence>
<evidence type="ECO:0000269" key="12">
    <source>
    </source>
</evidence>
<evidence type="ECO:0000269" key="13">
    <source>
    </source>
</evidence>
<evidence type="ECO:0000269" key="14">
    <source>
    </source>
</evidence>
<evidence type="ECO:0000269" key="15">
    <source>
    </source>
</evidence>
<evidence type="ECO:0000269" key="16">
    <source>
    </source>
</evidence>
<evidence type="ECO:0000269" key="17">
    <source>
    </source>
</evidence>
<evidence type="ECO:0000269" key="18">
    <source>
    </source>
</evidence>
<evidence type="ECO:0000269" key="19">
    <source>
    </source>
</evidence>
<evidence type="ECO:0000269" key="20">
    <source>
    </source>
</evidence>
<evidence type="ECO:0000305" key="21"/>
<evidence type="ECO:0000305" key="22">
    <source>
    </source>
</evidence>
<keyword id="KW-0256">Endoplasmic reticulum</keyword>
<keyword id="KW-0325">Glycoprotein</keyword>
<keyword id="KW-0445">Lipid transport</keyword>
<keyword id="KW-0446">Lipid-binding</keyword>
<keyword id="KW-0472">Membrane</keyword>
<keyword id="KW-1185">Reference proteome</keyword>
<keyword id="KW-0812">Transmembrane</keyword>
<keyword id="KW-1133">Transmembrane helix</keyword>
<keyword id="KW-0813">Transport</keyword>
<comment type="function">
    <text evidence="2 4 5 11 13 14 18 19 20">Component of the ERMES/MDM complex, which serves as a molecular tether to connect the endoplasmic reticulum and mitochondria (PubMed:19556461). Components of this complex are involved in the control of mitochondrial shape and protein biogenesis, and function in nonvesicular lipid trafficking between the ER and mitochondria (PubMed:27469264, PubMed:8089172, PubMed:9628893). The MDM12-MMM1 subcomplex functions in the major beta-barrel assembly pathway that is responsible for biogenesis of all outer membrane beta-barrel proteins, and acts in a late step after the SAM complex. The MDM10-MDM12-MMM1 subcomplex further acts in the TOM40-specific pathway after the action of the MDM12-MMM1 complex (PubMed:17410204). Essential for establishing and maintaining the structure of mitochondria and maintenance of mtDNA nucleoids (PubMed:11266455, PubMed:12454062, PubMed:14981098).</text>
</comment>
<comment type="subunit">
    <text evidence="1 2 7 13 14">Homodimer (By similarity). Component of the ER-mitochondria encounter structure (ERMES) or MDM complex, composed of MMM1, MDM10, MDM12 and MDM34 (PubMed:13679517, PubMed:17410204, PubMed:19556461). A MMM1 homodimer associates with one molecule of MDM12 on each side in a pairwise head-to-tail manner, and the SMP-LTD domains of MMM1 and MDM12 generate a continuous hydrophobic tunnel for phospholipid trafficking (By similarity).</text>
</comment>
<comment type="interaction">
    <interactant intactId="EBI-11029">
        <id>P41800</id>
    </interactant>
    <interactant intactId="EBI-10584">
        <id>Q92328</id>
        <label>MDM12</label>
    </interactant>
    <organismsDiffer>false</organismsDiffer>
    <experiments>5</experiments>
</comment>
<comment type="subcellular location">
    <subcellularLocation>
        <location evidence="2 4 6 8 10 11 12 14 15 19">Endoplasmic reticulum membrane</location>
        <topology evidence="2 4 6 8 10 11 12 14 19">Single-pass type I membrane protein</topology>
    </subcellularLocation>
    <text evidence="2">The ERMES/MDM complex localizes to a few discrete foci (around 10 per single cell), that represent mitochondria-endoplasmic reticulum junctions. These foci are often found next to mtDNA nucleoids.</text>
</comment>
<comment type="domain">
    <text evidence="2">The SMP-LTD domain is a barrel-like domain that can bind various types of glycerophospholipids in its interior and mediate their transfer between two adjacent bilayers.</text>
</comment>
<comment type="PTM">
    <text evidence="14">Glycosylated.</text>
</comment>
<comment type="disruption phenotype">
    <text evidence="16 17">Loss of mitochondrial integrity (PubMed:26370498). Abolishes growth on non-fermentable carbon source (glycerol with ethanol) (PubMed:26370498, PubMed:27280386). Slow growth on fermentable carbon source (glucose) (PubMed:26370498, PubMed:27280386). Synthetic lethal with VPS13 (PubMed:26370498, PubMed:27280386).</text>
</comment>
<comment type="miscellaneous">
    <text>Normal levels of MMM1 require MDM34.</text>
</comment>
<comment type="miscellaneous">
    <text evidence="9">Present with 2490 molecules/cell in log phase SD medium.</text>
</comment>
<comment type="similarity">
    <text evidence="2">Belongs to the MMM1 family.</text>
</comment>
<comment type="caution">
    <text evidence="22">Was originally proposed to be inserted into either the outer or inner mitochondrial membrane (PubMed:12972421, PubMed:8089172). More recent data indicates that it is instead inserted into the ER (PubMed:19556461).</text>
</comment>
<dbReference type="EMBL" id="L32793">
    <property type="protein sequence ID" value="AAA53581.1"/>
    <property type="molecule type" value="Genomic_DNA"/>
</dbReference>
<dbReference type="EMBL" id="X91488">
    <property type="protein sequence ID" value="CAA62763.1"/>
    <property type="molecule type" value="Genomic_DNA"/>
</dbReference>
<dbReference type="EMBL" id="Z73111">
    <property type="protein sequence ID" value="CAA97449.1"/>
    <property type="molecule type" value="Genomic_DNA"/>
</dbReference>
<dbReference type="EMBL" id="BK006945">
    <property type="protein sequence ID" value="DAA09313.1"/>
    <property type="molecule type" value="Genomic_DNA"/>
</dbReference>
<dbReference type="PIR" id="S64748">
    <property type="entry name" value="S64748"/>
</dbReference>
<dbReference type="RefSeq" id="NP_013095.1">
    <property type="nucleotide sequence ID" value="NM_001181826.1"/>
</dbReference>
<dbReference type="SMR" id="P41800"/>
<dbReference type="BioGRID" id="31245">
    <property type="interactions" value="667"/>
</dbReference>
<dbReference type="ComplexPortal" id="CPX-3196">
    <property type="entry name" value="ERMES complex"/>
</dbReference>
<dbReference type="DIP" id="DIP-4150N"/>
<dbReference type="FunCoup" id="P41800">
    <property type="interactions" value="117"/>
</dbReference>
<dbReference type="IntAct" id="P41800">
    <property type="interactions" value="40"/>
</dbReference>
<dbReference type="MINT" id="P41800"/>
<dbReference type="STRING" id="4932.YLL006W"/>
<dbReference type="TCDB" id="9.A.58.1.1">
    <property type="family name" value="the maintenance of mitochondrial morphology (mmm) family"/>
</dbReference>
<dbReference type="CarbonylDB" id="P41800"/>
<dbReference type="GlyCosmos" id="P41800">
    <property type="glycosylation" value="4 sites, No reported glycans"/>
</dbReference>
<dbReference type="GlyGen" id="P41800">
    <property type="glycosylation" value="4 sites"/>
</dbReference>
<dbReference type="iPTMnet" id="P41800"/>
<dbReference type="PaxDb" id="4932-YLL006W"/>
<dbReference type="PeptideAtlas" id="P41800"/>
<dbReference type="EnsemblFungi" id="YLL006W_mRNA">
    <property type="protein sequence ID" value="YLL006W"/>
    <property type="gene ID" value="YLL006W"/>
</dbReference>
<dbReference type="GeneID" id="850654"/>
<dbReference type="KEGG" id="sce:YLL006W"/>
<dbReference type="AGR" id="SGD:S000003929"/>
<dbReference type="SGD" id="S000003929">
    <property type="gene designation" value="MMM1"/>
</dbReference>
<dbReference type="VEuPathDB" id="FungiDB:YLL006W"/>
<dbReference type="eggNOG" id="ENOG502QUUW">
    <property type="taxonomic scope" value="Eukaryota"/>
</dbReference>
<dbReference type="HOGENOM" id="CLU_032730_2_0_1"/>
<dbReference type="InParanoid" id="P41800"/>
<dbReference type="OMA" id="WSFTQGL"/>
<dbReference type="OrthoDB" id="5599157at2759"/>
<dbReference type="BioCyc" id="YEAST:G3O-32111-MONOMER"/>
<dbReference type="BioGRID-ORCS" id="850654">
    <property type="hits" value="9 hits in 10 CRISPR screens"/>
</dbReference>
<dbReference type="PRO" id="PR:P41800"/>
<dbReference type="Proteomes" id="UP000002311">
    <property type="component" value="Chromosome XII"/>
</dbReference>
<dbReference type="RNAct" id="P41800">
    <property type="molecule type" value="protein"/>
</dbReference>
<dbReference type="GO" id="GO:0005783">
    <property type="term" value="C:endoplasmic reticulum"/>
    <property type="evidence" value="ECO:0000318"/>
    <property type="project" value="GO_Central"/>
</dbReference>
<dbReference type="GO" id="GO:0005789">
    <property type="term" value="C:endoplasmic reticulum membrane"/>
    <property type="evidence" value="ECO:0000314"/>
    <property type="project" value="SGD"/>
</dbReference>
<dbReference type="GO" id="GO:0032865">
    <property type="term" value="C:ERMES complex"/>
    <property type="evidence" value="ECO:0000314"/>
    <property type="project" value="SGD"/>
</dbReference>
<dbReference type="GO" id="GO:0044233">
    <property type="term" value="C:mitochondria-associated endoplasmic reticulum membrane contact site"/>
    <property type="evidence" value="ECO:0000314"/>
    <property type="project" value="SGD"/>
</dbReference>
<dbReference type="GO" id="GO:0005741">
    <property type="term" value="C:mitochondrial outer membrane"/>
    <property type="evidence" value="ECO:0000314"/>
    <property type="project" value="SGD"/>
</dbReference>
<dbReference type="GO" id="GO:0005739">
    <property type="term" value="C:mitochondrion"/>
    <property type="evidence" value="ECO:0007005"/>
    <property type="project" value="SGD"/>
</dbReference>
<dbReference type="GO" id="GO:0098799">
    <property type="term" value="C:outer mitochondrial membrane protein complex"/>
    <property type="evidence" value="ECO:0000303"/>
    <property type="project" value="ComplexPortal"/>
</dbReference>
<dbReference type="GO" id="GO:0005777">
    <property type="term" value="C:peroxisome"/>
    <property type="evidence" value="ECO:0007005"/>
    <property type="project" value="SGD"/>
</dbReference>
<dbReference type="GO" id="GO:0008289">
    <property type="term" value="F:lipid binding"/>
    <property type="evidence" value="ECO:0000318"/>
    <property type="project" value="GO_Central"/>
</dbReference>
<dbReference type="GO" id="GO:0015917">
    <property type="term" value="P:aminophospholipid transport"/>
    <property type="evidence" value="ECO:0000315"/>
    <property type="project" value="SGD"/>
</dbReference>
<dbReference type="GO" id="GO:0120009">
    <property type="term" value="P:intermembrane lipid transfer"/>
    <property type="evidence" value="ECO:0007669"/>
    <property type="project" value="GOC"/>
</dbReference>
<dbReference type="GO" id="GO:0000002">
    <property type="term" value="P:mitochondrial genome maintenance"/>
    <property type="evidence" value="ECO:0000315"/>
    <property type="project" value="SGD"/>
</dbReference>
<dbReference type="GO" id="GO:0070096">
    <property type="term" value="P:mitochondrial outer membrane translocase complex assembly"/>
    <property type="evidence" value="ECO:0000315"/>
    <property type="project" value="SGD"/>
</dbReference>
<dbReference type="GO" id="GO:0007005">
    <property type="term" value="P:mitochondrion organization"/>
    <property type="evidence" value="ECO:0000315"/>
    <property type="project" value="SGD"/>
</dbReference>
<dbReference type="GO" id="GO:1990456">
    <property type="term" value="P:mitochondrion-endoplasmic reticulum membrane tethering"/>
    <property type="evidence" value="ECO:0000315"/>
    <property type="project" value="SGD"/>
</dbReference>
<dbReference type="GO" id="GO:0055091">
    <property type="term" value="P:phospholipid homeostasis"/>
    <property type="evidence" value="ECO:0000303"/>
    <property type="project" value="ComplexPortal"/>
</dbReference>
<dbReference type="GO" id="GO:0015914">
    <property type="term" value="P:phospholipid transport"/>
    <property type="evidence" value="ECO:0000315"/>
    <property type="project" value="SGD"/>
</dbReference>
<dbReference type="GO" id="GO:0045040">
    <property type="term" value="P:protein insertion into mitochondrial outer membrane"/>
    <property type="evidence" value="ECO:0000315"/>
    <property type="project" value="SGD"/>
</dbReference>
<dbReference type="CDD" id="cd21671">
    <property type="entry name" value="SMP_Mmm1"/>
    <property type="match status" value="1"/>
</dbReference>
<dbReference type="HAMAP" id="MF_03103">
    <property type="entry name" value="Mmm1"/>
    <property type="match status" value="1"/>
</dbReference>
<dbReference type="InterPro" id="IPR027537">
    <property type="entry name" value="Mmm1"/>
</dbReference>
<dbReference type="InterPro" id="IPR019411">
    <property type="entry name" value="MMM1_dom"/>
</dbReference>
<dbReference type="InterPro" id="IPR031468">
    <property type="entry name" value="SMP_LBD"/>
</dbReference>
<dbReference type="PANTHER" id="PTHR13466">
    <property type="entry name" value="TEX2 PROTEIN-RELATED"/>
    <property type="match status" value="1"/>
</dbReference>
<dbReference type="Pfam" id="PF10296">
    <property type="entry name" value="MMM1"/>
    <property type="match status" value="1"/>
</dbReference>
<dbReference type="PROSITE" id="PS51847">
    <property type="entry name" value="SMP"/>
    <property type="match status" value="1"/>
</dbReference>
<accession>P41800</accession>
<accession>D6VXZ7</accession>